<feature type="chain" id="PRO_1000117087" description="ATP phosphoribosyltransferase">
    <location>
        <begin position="1"/>
        <end position="293"/>
    </location>
</feature>
<reference key="1">
    <citation type="submission" date="2008-10" db="EMBL/GenBank/DDBJ databases">
        <title>Complete sequence of Desulfovibrio vulgaris str. 'Miyazaki F'.</title>
        <authorList>
            <person name="Lucas S."/>
            <person name="Copeland A."/>
            <person name="Lapidus A."/>
            <person name="Glavina del Rio T."/>
            <person name="Dalin E."/>
            <person name="Tice H."/>
            <person name="Bruce D."/>
            <person name="Goodwin L."/>
            <person name="Pitluck S."/>
            <person name="Sims D."/>
            <person name="Brettin T."/>
            <person name="Detter J.C."/>
            <person name="Han C."/>
            <person name="Larimer F."/>
            <person name="Land M."/>
            <person name="Hauser L."/>
            <person name="Kyrpides N."/>
            <person name="Mikhailova N."/>
            <person name="Hazen T.C."/>
            <person name="Richardson P."/>
        </authorList>
    </citation>
    <scope>NUCLEOTIDE SEQUENCE [LARGE SCALE GENOMIC DNA]</scope>
    <source>
        <strain>DSM 19637 / Miyazaki F</strain>
    </source>
</reference>
<comment type="function">
    <text evidence="1">Catalyzes the condensation of ATP and 5-phosphoribose 1-diphosphate to form N'-(5'-phosphoribosyl)-ATP (PR-ATP). Has a crucial role in the pathway because the rate of histidine biosynthesis seems to be controlled primarily by regulation of HisG enzymatic activity.</text>
</comment>
<comment type="catalytic activity">
    <reaction evidence="1">
        <text>1-(5-phospho-beta-D-ribosyl)-ATP + diphosphate = 5-phospho-alpha-D-ribose 1-diphosphate + ATP</text>
        <dbReference type="Rhea" id="RHEA:18473"/>
        <dbReference type="ChEBI" id="CHEBI:30616"/>
        <dbReference type="ChEBI" id="CHEBI:33019"/>
        <dbReference type="ChEBI" id="CHEBI:58017"/>
        <dbReference type="ChEBI" id="CHEBI:73183"/>
        <dbReference type="EC" id="2.4.2.17"/>
    </reaction>
</comment>
<comment type="cofactor">
    <cofactor evidence="1">
        <name>Mg(2+)</name>
        <dbReference type="ChEBI" id="CHEBI:18420"/>
    </cofactor>
</comment>
<comment type="activity regulation">
    <text evidence="1">Feedback inhibited by histidine.</text>
</comment>
<comment type="pathway">
    <text evidence="1">Amino-acid biosynthesis; L-histidine biosynthesis; L-histidine from 5-phospho-alpha-D-ribose 1-diphosphate: step 1/9.</text>
</comment>
<comment type="subcellular location">
    <subcellularLocation>
        <location evidence="1">Cytoplasm</location>
    </subcellularLocation>
</comment>
<comment type="similarity">
    <text evidence="1">Belongs to the ATP phosphoribosyltransferase family. Long subfamily.</text>
</comment>
<name>HIS1_NITV9</name>
<dbReference type="EC" id="2.4.2.17" evidence="1"/>
<dbReference type="EMBL" id="CP001197">
    <property type="protein sequence ID" value="ACL08906.1"/>
    <property type="molecule type" value="Genomic_DNA"/>
</dbReference>
<dbReference type="SMR" id="B8DQ42"/>
<dbReference type="STRING" id="883.DvMF_1963"/>
<dbReference type="KEGG" id="dvm:DvMF_1963"/>
<dbReference type="eggNOG" id="COG0040">
    <property type="taxonomic scope" value="Bacteria"/>
</dbReference>
<dbReference type="HOGENOM" id="CLU_038115_1_1_7"/>
<dbReference type="OrthoDB" id="9801867at2"/>
<dbReference type="UniPathway" id="UPA00031">
    <property type="reaction ID" value="UER00006"/>
</dbReference>
<dbReference type="GO" id="GO:0005737">
    <property type="term" value="C:cytoplasm"/>
    <property type="evidence" value="ECO:0007669"/>
    <property type="project" value="UniProtKB-SubCell"/>
</dbReference>
<dbReference type="GO" id="GO:0005524">
    <property type="term" value="F:ATP binding"/>
    <property type="evidence" value="ECO:0007669"/>
    <property type="project" value="UniProtKB-KW"/>
</dbReference>
<dbReference type="GO" id="GO:0003879">
    <property type="term" value="F:ATP phosphoribosyltransferase activity"/>
    <property type="evidence" value="ECO:0007669"/>
    <property type="project" value="UniProtKB-UniRule"/>
</dbReference>
<dbReference type="GO" id="GO:0000287">
    <property type="term" value="F:magnesium ion binding"/>
    <property type="evidence" value="ECO:0007669"/>
    <property type="project" value="UniProtKB-UniRule"/>
</dbReference>
<dbReference type="GO" id="GO:0000105">
    <property type="term" value="P:L-histidine biosynthetic process"/>
    <property type="evidence" value="ECO:0007669"/>
    <property type="project" value="UniProtKB-UniRule"/>
</dbReference>
<dbReference type="CDD" id="cd13593">
    <property type="entry name" value="PBP2_HisGL3"/>
    <property type="match status" value="1"/>
</dbReference>
<dbReference type="FunFam" id="3.30.70.120:FF:000002">
    <property type="entry name" value="ATP phosphoribosyltransferase"/>
    <property type="match status" value="1"/>
</dbReference>
<dbReference type="FunFam" id="3.40.190.10:FF:000258">
    <property type="entry name" value="ATP phosphoribosyltransferase"/>
    <property type="match status" value="1"/>
</dbReference>
<dbReference type="Gene3D" id="3.30.70.120">
    <property type="match status" value="1"/>
</dbReference>
<dbReference type="Gene3D" id="3.40.190.10">
    <property type="entry name" value="Periplasmic binding protein-like II"/>
    <property type="match status" value="2"/>
</dbReference>
<dbReference type="HAMAP" id="MF_00079">
    <property type="entry name" value="HisG_Long"/>
    <property type="match status" value="1"/>
</dbReference>
<dbReference type="InterPro" id="IPR020621">
    <property type="entry name" value="ATP-PRT_HisG_long"/>
</dbReference>
<dbReference type="InterPro" id="IPR013820">
    <property type="entry name" value="ATP_PRibTrfase_cat"/>
</dbReference>
<dbReference type="InterPro" id="IPR018198">
    <property type="entry name" value="ATP_PRibTrfase_CS"/>
</dbReference>
<dbReference type="InterPro" id="IPR001348">
    <property type="entry name" value="ATP_PRibTrfase_HisG"/>
</dbReference>
<dbReference type="InterPro" id="IPR013115">
    <property type="entry name" value="HisG_C"/>
</dbReference>
<dbReference type="InterPro" id="IPR011322">
    <property type="entry name" value="N-reg_PII-like_a/b"/>
</dbReference>
<dbReference type="InterPro" id="IPR015867">
    <property type="entry name" value="N-reg_PII/ATP_PRibTrfase_C"/>
</dbReference>
<dbReference type="NCBIfam" id="TIGR00070">
    <property type="entry name" value="hisG"/>
    <property type="match status" value="1"/>
</dbReference>
<dbReference type="NCBIfam" id="TIGR03455">
    <property type="entry name" value="HisG_C-term"/>
    <property type="match status" value="1"/>
</dbReference>
<dbReference type="PANTHER" id="PTHR21403:SF10">
    <property type="entry name" value="ATP PHOSPHORIBOSYLTRANSFERASE"/>
    <property type="match status" value="1"/>
</dbReference>
<dbReference type="PANTHER" id="PTHR21403">
    <property type="entry name" value="ATP PHOSPHORIBOSYLTRANSFERASE ATP-PRTASE"/>
    <property type="match status" value="1"/>
</dbReference>
<dbReference type="Pfam" id="PF01634">
    <property type="entry name" value="HisG"/>
    <property type="match status" value="1"/>
</dbReference>
<dbReference type="Pfam" id="PF08029">
    <property type="entry name" value="HisG_C"/>
    <property type="match status" value="1"/>
</dbReference>
<dbReference type="SUPFAM" id="SSF54913">
    <property type="entry name" value="GlnB-like"/>
    <property type="match status" value="1"/>
</dbReference>
<dbReference type="SUPFAM" id="SSF53850">
    <property type="entry name" value="Periplasmic binding protein-like II"/>
    <property type="match status" value="1"/>
</dbReference>
<dbReference type="PROSITE" id="PS01316">
    <property type="entry name" value="ATP_P_PHORIBOSYLTR"/>
    <property type="match status" value="1"/>
</dbReference>
<organism>
    <name type="scientific">Nitratidesulfovibrio vulgaris (strain DSM 19637 / Miyazaki F)</name>
    <name type="common">Desulfovibrio vulgaris</name>
    <dbReference type="NCBI Taxonomy" id="883"/>
    <lineage>
        <taxon>Bacteria</taxon>
        <taxon>Pseudomonadati</taxon>
        <taxon>Thermodesulfobacteriota</taxon>
        <taxon>Desulfovibrionia</taxon>
        <taxon>Desulfovibrionales</taxon>
        <taxon>Desulfovibrionaceae</taxon>
        <taxon>Nitratidesulfovibrio</taxon>
    </lineage>
</organism>
<gene>
    <name evidence="1" type="primary">hisG</name>
    <name type="ordered locus">DvMF_1963</name>
</gene>
<evidence type="ECO:0000255" key="1">
    <source>
        <dbReference type="HAMAP-Rule" id="MF_00079"/>
    </source>
</evidence>
<accession>B8DQ42</accession>
<sequence>MSGNNMLKIGIPKGSLEEATVNLFARSGWKIRKHHRNYFPEINDPELTARLCRVQEIPRYLEDGVLDVGLTGKDWLLETGADVVTVSDLVYSKVSNRPARWVLAVAGDSPYVRPEDLAGCTIATELLGVTRRYFEDAGIPVKVQYSWGATEAKVVEGLADAIVEVTETGTTIKAHGLRIIAEVLLTNTVLIAGKAAWADPWKRAKIEQIDLLLQGALRADSLVGLKMNVPAHNLDAVLDQLPSLNSPTVAGLRDSTWYAVEIVVENDLVRDLIPRLRAAGAEGIIEYSLNKVI</sequence>
<proteinExistence type="inferred from homology"/>
<keyword id="KW-0028">Amino-acid biosynthesis</keyword>
<keyword id="KW-0067">ATP-binding</keyword>
<keyword id="KW-0963">Cytoplasm</keyword>
<keyword id="KW-0328">Glycosyltransferase</keyword>
<keyword id="KW-0368">Histidine biosynthesis</keyword>
<keyword id="KW-0460">Magnesium</keyword>
<keyword id="KW-0479">Metal-binding</keyword>
<keyword id="KW-0547">Nucleotide-binding</keyword>
<keyword id="KW-0808">Transferase</keyword>
<protein>
    <recommendedName>
        <fullName evidence="1">ATP phosphoribosyltransferase</fullName>
        <shortName evidence="1">ATP-PRT</shortName>
        <shortName evidence="1">ATP-PRTase</shortName>
        <ecNumber evidence="1">2.4.2.17</ecNumber>
    </recommendedName>
</protein>